<sequence>MDALMPAPQSADLRRITLANGLSVALCHDSRLKRSAASLRVAAGSHDAPLAWPGLAHFLEHLFFLGTERFQAGENLMTFVQRHGGQVNASTRERTTDFFFELPQTAFAQGLERLCDMLARPRMTVADQLREREVLHAEFIAWRGDANARDQLRLLAAVNPQHPLRGFHAGNRYSLSVPNPAFQQALQNFYQRFYQAAQMTLCLSGPQSLAELETLANTHGALFASGTKVRQHAPAPLMKHPTSLEHIDEQKHLLFACEHLPAKADEAVAFLCHWLNAAQPGGLIATLIERGLIESLNATPLYQFDGQLLLDIELNANRPSASTIKSLLLSWLRFFKTQWPALIEEYQRLEQRRLQMSGALTLAHHHCRELPAQLSDQGADALRELLEQLTSNALIGSAPVDNLDSTLAEWRLPAPNPFLESIAEDSPEAALYLRWELPSAQPTLWQMLNTRLTPLIEDARQAGVNLTFSAYGNYWQIQLNGLRAPMVAVIEHALQRLRHAAPGPLTHAGQASEPLIPVRQLLKHLADHYLISKQAQTTGDLHTVWKHSRWISFASGFCAASQLQLNTALNATPGTRQTDVPTLPAIRLGKRWSSEASSSSENAVLVFCPAPTASVEDEAAWRLLAHLLQAPFYQRLRVELQLGYAVFSGIRQIAGRTGLLFGVQSPTCSADQLFQHIEAFIGRLPALIRTADLPEQIRVLSAQFDPANMPDQQQADIHWQAYLAGHRAHHSQALQRALSNLDTHSLLATANQLIDAAGGWLIVASRPASAAVPLSLPER</sequence>
<evidence type="ECO:0000250" key="1"/>
<evidence type="ECO:0000255" key="2">
    <source>
        <dbReference type="PROSITE-ProRule" id="PRU10096"/>
    </source>
</evidence>
<evidence type="ECO:0000305" key="3"/>
<protein>
    <recommendedName>
        <fullName>Coenzyme PQQ synthesis protein F</fullName>
        <ecNumber>3.4.24.-</ecNumber>
    </recommendedName>
    <alternativeName>
        <fullName>Pyrroloquinoline quinone biosynthesis protein F</fullName>
    </alternativeName>
</protein>
<proteinExistence type="inferred from homology"/>
<dbReference type="EC" id="3.4.24.-"/>
<dbReference type="EMBL" id="AE016853">
    <property type="protein sequence ID" value="AAO54057.1"/>
    <property type="molecule type" value="Genomic_DNA"/>
</dbReference>
<dbReference type="RefSeq" id="NP_790362.1">
    <property type="nucleotide sequence ID" value="NC_004578.1"/>
</dbReference>
<dbReference type="SMR" id="Q88A79"/>
<dbReference type="STRING" id="223283.PSPTO_0514"/>
<dbReference type="KEGG" id="pst:PSPTO_0514"/>
<dbReference type="PATRIC" id="fig|223283.9.peg.528"/>
<dbReference type="eggNOG" id="COG1025">
    <property type="taxonomic scope" value="Bacteria"/>
</dbReference>
<dbReference type="HOGENOM" id="CLU_021089_0_0_6"/>
<dbReference type="OrthoDB" id="9811314at2"/>
<dbReference type="PhylomeDB" id="Q88A79"/>
<dbReference type="UniPathway" id="UPA00539"/>
<dbReference type="Proteomes" id="UP000002515">
    <property type="component" value="Chromosome"/>
</dbReference>
<dbReference type="GO" id="GO:0005737">
    <property type="term" value="C:cytoplasm"/>
    <property type="evidence" value="ECO:0007669"/>
    <property type="project" value="UniProtKB-ARBA"/>
</dbReference>
<dbReference type="GO" id="GO:0004222">
    <property type="term" value="F:metalloendopeptidase activity"/>
    <property type="evidence" value="ECO:0007669"/>
    <property type="project" value="InterPro"/>
</dbReference>
<dbReference type="GO" id="GO:0008270">
    <property type="term" value="F:zinc ion binding"/>
    <property type="evidence" value="ECO:0007669"/>
    <property type="project" value="InterPro"/>
</dbReference>
<dbReference type="GO" id="GO:0006508">
    <property type="term" value="P:proteolysis"/>
    <property type="evidence" value="ECO:0007669"/>
    <property type="project" value="UniProtKB-KW"/>
</dbReference>
<dbReference type="GO" id="GO:0018189">
    <property type="term" value="P:pyrroloquinoline quinone biosynthetic process"/>
    <property type="evidence" value="ECO:0007669"/>
    <property type="project" value="UniProtKB-UniPathway"/>
</dbReference>
<dbReference type="Gene3D" id="3.30.830.10">
    <property type="entry name" value="Metalloenzyme, LuxS/M16 peptidase-like"/>
    <property type="match status" value="2"/>
</dbReference>
<dbReference type="InterPro" id="IPR011249">
    <property type="entry name" value="Metalloenz_LuxS/M16"/>
</dbReference>
<dbReference type="InterPro" id="IPR011765">
    <property type="entry name" value="Pept_M16_N"/>
</dbReference>
<dbReference type="InterPro" id="IPR001431">
    <property type="entry name" value="Pept_M16_Zn_BS"/>
</dbReference>
<dbReference type="InterPro" id="IPR050626">
    <property type="entry name" value="Peptidase_M16"/>
</dbReference>
<dbReference type="InterPro" id="IPR007863">
    <property type="entry name" value="Peptidase_M16_C"/>
</dbReference>
<dbReference type="InterPro" id="IPR011844">
    <property type="entry name" value="PQQ_synth_PqqF"/>
</dbReference>
<dbReference type="InterPro" id="IPR054734">
    <property type="entry name" value="PqqF-like_C_4"/>
</dbReference>
<dbReference type="InterPro" id="IPR054733">
    <property type="entry name" value="PqqF_C_3"/>
</dbReference>
<dbReference type="NCBIfam" id="TIGR02110">
    <property type="entry name" value="PQQ_syn_pqqF"/>
    <property type="match status" value="1"/>
</dbReference>
<dbReference type="PANTHER" id="PTHR43690:SF18">
    <property type="entry name" value="INSULIN-DEGRADING ENZYME-RELATED"/>
    <property type="match status" value="1"/>
</dbReference>
<dbReference type="PANTHER" id="PTHR43690">
    <property type="entry name" value="NARDILYSIN"/>
    <property type="match status" value="1"/>
</dbReference>
<dbReference type="Pfam" id="PF00675">
    <property type="entry name" value="Peptidase_M16"/>
    <property type="match status" value="1"/>
</dbReference>
<dbReference type="Pfam" id="PF05193">
    <property type="entry name" value="Peptidase_M16_C"/>
    <property type="match status" value="1"/>
</dbReference>
<dbReference type="Pfam" id="PF22456">
    <property type="entry name" value="PqqF-like_C_4"/>
    <property type="match status" value="1"/>
</dbReference>
<dbReference type="Pfam" id="PF22455">
    <property type="entry name" value="PqqF_C_3"/>
    <property type="match status" value="1"/>
</dbReference>
<dbReference type="SUPFAM" id="SSF63411">
    <property type="entry name" value="LuxS/MPP-like metallohydrolase"/>
    <property type="match status" value="2"/>
</dbReference>
<dbReference type="PROSITE" id="PS00143">
    <property type="entry name" value="INSULINASE"/>
    <property type="match status" value="1"/>
</dbReference>
<name>PQQF_PSESM</name>
<keyword id="KW-0378">Hydrolase</keyword>
<keyword id="KW-0479">Metal-binding</keyword>
<keyword id="KW-0482">Metalloprotease</keyword>
<keyword id="KW-0884">PQQ biosynthesis</keyword>
<keyword id="KW-0645">Protease</keyword>
<keyword id="KW-1185">Reference proteome</keyword>
<keyword id="KW-0862">Zinc</keyword>
<organism>
    <name type="scientific">Pseudomonas syringae pv. tomato (strain ATCC BAA-871 / DC3000)</name>
    <dbReference type="NCBI Taxonomy" id="223283"/>
    <lineage>
        <taxon>Bacteria</taxon>
        <taxon>Pseudomonadati</taxon>
        <taxon>Pseudomonadota</taxon>
        <taxon>Gammaproteobacteria</taxon>
        <taxon>Pseudomonadales</taxon>
        <taxon>Pseudomonadaceae</taxon>
        <taxon>Pseudomonas</taxon>
    </lineage>
</organism>
<gene>
    <name type="primary">pqqF</name>
    <name type="ordered locus">PSPTO_0514</name>
</gene>
<comment type="function">
    <text evidence="1">Required for coenzyme pyrroloquinoline quinone (PQQ) biosynthesis. It is thought that this protein is a protease that cleaves peptides bond in a small peptide (gene pqqA), providing the glutamate and tyrosine residues which are necessary for the synthesis of PQQ (By similarity).</text>
</comment>
<comment type="cofactor">
    <cofactor evidence="1">
        <name>Zn(2+)</name>
        <dbReference type="ChEBI" id="CHEBI:29105"/>
    </cofactor>
    <text evidence="1">Binds 1 zinc ion per subunit.</text>
</comment>
<comment type="pathway">
    <text>Cofactor biosynthesis; pyrroloquinoline quinone biosynthesis.</text>
</comment>
<comment type="similarity">
    <text evidence="3">Belongs to the peptidase M16 family.</text>
</comment>
<feature type="chain" id="PRO_0000074414" description="Coenzyme PQQ synthesis protein F">
    <location>
        <begin position="1"/>
        <end position="779"/>
    </location>
</feature>
<feature type="active site" description="Proton acceptor" evidence="2">
    <location>
        <position position="60"/>
    </location>
</feature>
<feature type="binding site" evidence="2">
    <location>
        <position position="57"/>
    </location>
    <ligand>
        <name>Zn(2+)</name>
        <dbReference type="ChEBI" id="CHEBI:29105"/>
    </ligand>
</feature>
<feature type="binding site" evidence="2">
    <location>
        <position position="61"/>
    </location>
    <ligand>
        <name>Zn(2+)</name>
        <dbReference type="ChEBI" id="CHEBI:29105"/>
    </ligand>
</feature>
<feature type="binding site" evidence="2">
    <location>
        <position position="138"/>
    </location>
    <ligand>
        <name>Zn(2+)</name>
        <dbReference type="ChEBI" id="CHEBI:29105"/>
    </ligand>
</feature>
<reference key="1">
    <citation type="journal article" date="2003" name="Proc. Natl. Acad. Sci. U.S.A.">
        <title>The complete genome sequence of the Arabidopsis and tomato pathogen Pseudomonas syringae pv. tomato DC3000.</title>
        <authorList>
            <person name="Buell C.R."/>
            <person name="Joardar V."/>
            <person name="Lindeberg M."/>
            <person name="Selengut J."/>
            <person name="Paulsen I.T."/>
            <person name="Gwinn M.L."/>
            <person name="Dodson R.J."/>
            <person name="DeBoy R.T."/>
            <person name="Durkin A.S."/>
            <person name="Kolonay J.F."/>
            <person name="Madupu R."/>
            <person name="Daugherty S.C."/>
            <person name="Brinkac L.M."/>
            <person name="Beanan M.J."/>
            <person name="Haft D.H."/>
            <person name="Nelson W.C."/>
            <person name="Davidsen T.M."/>
            <person name="Zafar N."/>
            <person name="Zhou L."/>
            <person name="Liu J."/>
            <person name="Yuan Q."/>
            <person name="Khouri H.M."/>
            <person name="Fedorova N.B."/>
            <person name="Tran B."/>
            <person name="Russell D."/>
            <person name="Berry K.J."/>
            <person name="Utterback T.R."/>
            <person name="Van Aken S.E."/>
            <person name="Feldblyum T.V."/>
            <person name="D'Ascenzo M."/>
            <person name="Deng W.-L."/>
            <person name="Ramos A.R."/>
            <person name="Alfano J.R."/>
            <person name="Cartinhour S."/>
            <person name="Chatterjee A.K."/>
            <person name="Delaney T.P."/>
            <person name="Lazarowitz S.G."/>
            <person name="Martin G.B."/>
            <person name="Schneider D.J."/>
            <person name="Tang X."/>
            <person name="Bender C.L."/>
            <person name="White O."/>
            <person name="Fraser C.M."/>
            <person name="Collmer A."/>
        </authorList>
    </citation>
    <scope>NUCLEOTIDE SEQUENCE [LARGE SCALE GENOMIC DNA]</scope>
    <source>
        <strain>ATCC BAA-871 / DC3000</strain>
    </source>
</reference>
<accession>Q88A79</accession>